<dbReference type="EC" id="2.7.8.26" evidence="1"/>
<dbReference type="EMBL" id="AE009950">
    <property type="protein sequence ID" value="AAL80423.1"/>
    <property type="molecule type" value="Genomic_DNA"/>
</dbReference>
<dbReference type="RefSeq" id="WP_011011414.1">
    <property type="nucleotide sequence ID" value="NZ_CP023154.1"/>
</dbReference>
<dbReference type="STRING" id="186497.PF0299"/>
<dbReference type="PaxDb" id="186497-PF0299"/>
<dbReference type="GeneID" id="41712090"/>
<dbReference type="KEGG" id="pfu:PF0299"/>
<dbReference type="PATRIC" id="fig|186497.12.peg.314"/>
<dbReference type="eggNOG" id="arCOG04338">
    <property type="taxonomic scope" value="Archaea"/>
</dbReference>
<dbReference type="HOGENOM" id="CLU_057426_2_0_2"/>
<dbReference type="OrthoDB" id="11748at2157"/>
<dbReference type="PhylomeDB" id="Q8U400"/>
<dbReference type="UniPathway" id="UPA00148">
    <property type="reaction ID" value="UER00238"/>
</dbReference>
<dbReference type="Proteomes" id="UP000001013">
    <property type="component" value="Chromosome"/>
</dbReference>
<dbReference type="GO" id="GO:0005886">
    <property type="term" value="C:plasma membrane"/>
    <property type="evidence" value="ECO:0007669"/>
    <property type="project" value="UniProtKB-SubCell"/>
</dbReference>
<dbReference type="GO" id="GO:0051073">
    <property type="term" value="F:adenosylcobinamide-GDP ribazoletransferase activity"/>
    <property type="evidence" value="ECO:0007669"/>
    <property type="project" value="UniProtKB-UniRule"/>
</dbReference>
<dbReference type="GO" id="GO:0008818">
    <property type="term" value="F:cobalamin 5'-phosphate synthase activity"/>
    <property type="evidence" value="ECO:0007669"/>
    <property type="project" value="UniProtKB-UniRule"/>
</dbReference>
<dbReference type="GO" id="GO:0009236">
    <property type="term" value="P:cobalamin biosynthetic process"/>
    <property type="evidence" value="ECO:0007669"/>
    <property type="project" value="UniProtKB-UniRule"/>
</dbReference>
<dbReference type="HAMAP" id="MF_00719">
    <property type="entry name" value="CobS"/>
    <property type="match status" value="1"/>
</dbReference>
<dbReference type="InterPro" id="IPR003805">
    <property type="entry name" value="CobS"/>
</dbReference>
<dbReference type="NCBIfam" id="TIGR00317">
    <property type="entry name" value="cobS"/>
    <property type="match status" value="1"/>
</dbReference>
<dbReference type="PANTHER" id="PTHR34148">
    <property type="entry name" value="ADENOSYLCOBINAMIDE-GDP RIBAZOLETRANSFERASE"/>
    <property type="match status" value="1"/>
</dbReference>
<dbReference type="PANTHER" id="PTHR34148:SF1">
    <property type="entry name" value="ADENOSYLCOBINAMIDE-GDP RIBAZOLETRANSFERASE"/>
    <property type="match status" value="1"/>
</dbReference>
<dbReference type="Pfam" id="PF02654">
    <property type="entry name" value="CobS"/>
    <property type="match status" value="1"/>
</dbReference>
<reference key="1">
    <citation type="journal article" date="1999" name="Genetics">
        <title>Divergence of the hyperthermophilic archaea Pyrococcus furiosus and P. horikoshii inferred from complete genomic sequences.</title>
        <authorList>
            <person name="Maeder D.L."/>
            <person name="Weiss R.B."/>
            <person name="Dunn D.M."/>
            <person name="Cherry J.L."/>
            <person name="Gonzalez J.M."/>
            <person name="DiRuggiero J."/>
            <person name="Robb F.T."/>
        </authorList>
    </citation>
    <scope>NUCLEOTIDE SEQUENCE [LARGE SCALE GENOMIC DNA]</scope>
    <source>
        <strain>ATCC 43587 / DSM 3638 / JCM 8422 / Vc1</strain>
    </source>
</reference>
<keyword id="KW-1003">Cell membrane</keyword>
<keyword id="KW-0169">Cobalamin biosynthesis</keyword>
<keyword id="KW-0460">Magnesium</keyword>
<keyword id="KW-0472">Membrane</keyword>
<keyword id="KW-1185">Reference proteome</keyword>
<keyword id="KW-0808">Transferase</keyword>
<keyword id="KW-0812">Transmembrane</keyword>
<keyword id="KW-1133">Transmembrane helix</keyword>
<sequence>MKNLIQFMTRVPIKGDFEKAREEVWMLPLLTPLTAFIPSLILYLNIPLKNVLSILSLYWVIGLLHLDGLADWADGIMVKGDREKKVRAMKDVNTGIAGTFAVVMILLIQVYSLFSAPFYSIYLAELNSKMAMLLALATKKPLGEGLGKYFMDKLTTKRVFLGGVLYALLLIPILLYDPQSIFALLGLVGGIYAVKISLDNFGGLNGDCIGAVGEITRGATLLILGVWA</sequence>
<protein>
    <recommendedName>
        <fullName evidence="1">Adenosylcobinamide-GDP ribazoletransferase</fullName>
        <ecNumber evidence="1">2.7.8.26</ecNumber>
    </recommendedName>
    <alternativeName>
        <fullName evidence="1">Cobalamin synthase</fullName>
    </alternativeName>
    <alternativeName>
        <fullName evidence="1">Cobalamin-5'-phosphate synthase</fullName>
    </alternativeName>
</protein>
<name>COBS_PYRFU</name>
<organism>
    <name type="scientific">Pyrococcus furiosus (strain ATCC 43587 / DSM 3638 / JCM 8422 / Vc1)</name>
    <dbReference type="NCBI Taxonomy" id="186497"/>
    <lineage>
        <taxon>Archaea</taxon>
        <taxon>Methanobacteriati</taxon>
        <taxon>Methanobacteriota</taxon>
        <taxon>Thermococci</taxon>
        <taxon>Thermococcales</taxon>
        <taxon>Thermococcaceae</taxon>
        <taxon>Pyrococcus</taxon>
    </lineage>
</organism>
<gene>
    <name evidence="1" type="primary">cobS</name>
    <name type="ordered locus">PF0299</name>
</gene>
<comment type="function">
    <text evidence="1">Joins adenosylcobinamide-GDP and alpha-ribazole to generate adenosylcobalamin (Ado-cobalamin). Also synthesizes adenosylcobalamin 5'-phosphate from adenosylcobinamide-GDP and alpha-ribazole 5'-phosphate.</text>
</comment>
<comment type="catalytic activity">
    <reaction evidence="1">
        <text>alpha-ribazole + adenosylcob(III)inamide-GDP = adenosylcob(III)alamin + GMP + H(+)</text>
        <dbReference type="Rhea" id="RHEA:16049"/>
        <dbReference type="ChEBI" id="CHEBI:10329"/>
        <dbReference type="ChEBI" id="CHEBI:15378"/>
        <dbReference type="ChEBI" id="CHEBI:18408"/>
        <dbReference type="ChEBI" id="CHEBI:58115"/>
        <dbReference type="ChEBI" id="CHEBI:60487"/>
        <dbReference type="EC" id="2.7.8.26"/>
    </reaction>
</comment>
<comment type="catalytic activity">
    <reaction evidence="1">
        <text>alpha-ribazole 5'-phosphate + adenosylcob(III)inamide-GDP = adenosylcob(III)alamin 5'-phosphate + GMP + H(+)</text>
        <dbReference type="Rhea" id="RHEA:23560"/>
        <dbReference type="ChEBI" id="CHEBI:15378"/>
        <dbReference type="ChEBI" id="CHEBI:57918"/>
        <dbReference type="ChEBI" id="CHEBI:58115"/>
        <dbReference type="ChEBI" id="CHEBI:60487"/>
        <dbReference type="ChEBI" id="CHEBI:60493"/>
        <dbReference type="EC" id="2.7.8.26"/>
    </reaction>
</comment>
<comment type="cofactor">
    <cofactor evidence="1">
        <name>Mg(2+)</name>
        <dbReference type="ChEBI" id="CHEBI:18420"/>
    </cofactor>
</comment>
<comment type="pathway">
    <text evidence="1">Cofactor biosynthesis; adenosylcobalamin biosynthesis; adenosylcobalamin from cob(II)yrinate a,c-diamide: step 7/7.</text>
</comment>
<comment type="subcellular location">
    <subcellularLocation>
        <location evidence="1">Cell membrane</location>
        <topology evidence="1">Multi-pass membrane protein</topology>
    </subcellularLocation>
</comment>
<comment type="similarity">
    <text evidence="1">Belongs to the CobS family.</text>
</comment>
<proteinExistence type="inferred from homology"/>
<evidence type="ECO:0000255" key="1">
    <source>
        <dbReference type="HAMAP-Rule" id="MF_00719"/>
    </source>
</evidence>
<feature type="chain" id="PRO_0000146917" description="Adenosylcobinamide-GDP ribazoletransferase">
    <location>
        <begin position="1"/>
        <end position="228"/>
    </location>
</feature>
<feature type="transmembrane region" description="Helical" evidence="1">
    <location>
        <begin position="24"/>
        <end position="44"/>
    </location>
</feature>
<feature type="transmembrane region" description="Helical" evidence="1">
    <location>
        <begin position="50"/>
        <end position="70"/>
    </location>
</feature>
<feature type="transmembrane region" description="Helical" evidence="1">
    <location>
        <begin position="96"/>
        <end position="116"/>
    </location>
</feature>
<feature type="transmembrane region" description="Helical" evidence="1">
    <location>
        <begin position="117"/>
        <end position="137"/>
    </location>
</feature>
<feature type="transmembrane region" description="Helical" evidence="1">
    <location>
        <begin position="159"/>
        <end position="176"/>
    </location>
</feature>
<feature type="transmembrane region" description="Helical" evidence="1">
    <location>
        <begin position="181"/>
        <end position="198"/>
    </location>
</feature>
<accession>Q8U400</accession>